<protein>
    <recommendedName>
        <fullName evidence="1">Small ribosomal subunit protein uS19</fullName>
    </recommendedName>
    <alternativeName>
        <fullName evidence="2">30S ribosomal protein S19</fullName>
    </alternativeName>
</protein>
<reference key="1">
    <citation type="submission" date="2008-02" db="EMBL/GenBank/DDBJ databases">
        <title>Complete sequence of Pseudomonas putida W619.</title>
        <authorList>
            <person name="Copeland A."/>
            <person name="Lucas S."/>
            <person name="Lapidus A."/>
            <person name="Barry K."/>
            <person name="Detter J.C."/>
            <person name="Glavina del Rio T."/>
            <person name="Dalin E."/>
            <person name="Tice H."/>
            <person name="Pitluck S."/>
            <person name="Chain P."/>
            <person name="Malfatti S."/>
            <person name="Shin M."/>
            <person name="Vergez L."/>
            <person name="Schmutz J."/>
            <person name="Larimer F."/>
            <person name="Land M."/>
            <person name="Hauser L."/>
            <person name="Kyrpides N."/>
            <person name="Kim E."/>
            <person name="Taghavi S."/>
            <person name="Vangronsveld D."/>
            <person name="van der Lelie D."/>
            <person name="Richardson P."/>
        </authorList>
    </citation>
    <scope>NUCLEOTIDE SEQUENCE [LARGE SCALE GENOMIC DNA]</scope>
    <source>
        <strain>W619</strain>
    </source>
</reference>
<proteinExistence type="inferred from homology"/>
<accession>B1JDW0</accession>
<dbReference type="EMBL" id="CP000949">
    <property type="protein sequence ID" value="ACA75221.1"/>
    <property type="molecule type" value="Genomic_DNA"/>
</dbReference>
<dbReference type="SMR" id="B1JDW0"/>
<dbReference type="STRING" id="390235.PputW619_4745"/>
<dbReference type="KEGG" id="ppw:PputW619_4745"/>
<dbReference type="eggNOG" id="COG0185">
    <property type="taxonomic scope" value="Bacteria"/>
</dbReference>
<dbReference type="HOGENOM" id="CLU_144911_0_1_6"/>
<dbReference type="OrthoDB" id="9797833at2"/>
<dbReference type="GO" id="GO:0005737">
    <property type="term" value="C:cytoplasm"/>
    <property type="evidence" value="ECO:0007669"/>
    <property type="project" value="UniProtKB-ARBA"/>
</dbReference>
<dbReference type="GO" id="GO:0015935">
    <property type="term" value="C:small ribosomal subunit"/>
    <property type="evidence" value="ECO:0007669"/>
    <property type="project" value="InterPro"/>
</dbReference>
<dbReference type="GO" id="GO:0019843">
    <property type="term" value="F:rRNA binding"/>
    <property type="evidence" value="ECO:0007669"/>
    <property type="project" value="UniProtKB-UniRule"/>
</dbReference>
<dbReference type="GO" id="GO:0003735">
    <property type="term" value="F:structural constituent of ribosome"/>
    <property type="evidence" value="ECO:0007669"/>
    <property type="project" value="InterPro"/>
</dbReference>
<dbReference type="GO" id="GO:0000028">
    <property type="term" value="P:ribosomal small subunit assembly"/>
    <property type="evidence" value="ECO:0007669"/>
    <property type="project" value="TreeGrafter"/>
</dbReference>
<dbReference type="GO" id="GO:0006412">
    <property type="term" value="P:translation"/>
    <property type="evidence" value="ECO:0007669"/>
    <property type="project" value="UniProtKB-UniRule"/>
</dbReference>
<dbReference type="FunFam" id="3.30.860.10:FF:000001">
    <property type="entry name" value="30S ribosomal protein S19"/>
    <property type="match status" value="1"/>
</dbReference>
<dbReference type="Gene3D" id="3.30.860.10">
    <property type="entry name" value="30s Ribosomal Protein S19, Chain A"/>
    <property type="match status" value="1"/>
</dbReference>
<dbReference type="HAMAP" id="MF_00531">
    <property type="entry name" value="Ribosomal_uS19"/>
    <property type="match status" value="1"/>
</dbReference>
<dbReference type="InterPro" id="IPR002222">
    <property type="entry name" value="Ribosomal_uS19"/>
</dbReference>
<dbReference type="InterPro" id="IPR005732">
    <property type="entry name" value="Ribosomal_uS19_bac-type"/>
</dbReference>
<dbReference type="InterPro" id="IPR020934">
    <property type="entry name" value="Ribosomal_uS19_CS"/>
</dbReference>
<dbReference type="InterPro" id="IPR023575">
    <property type="entry name" value="Ribosomal_uS19_SF"/>
</dbReference>
<dbReference type="NCBIfam" id="TIGR01050">
    <property type="entry name" value="rpsS_bact"/>
    <property type="match status" value="1"/>
</dbReference>
<dbReference type="PANTHER" id="PTHR11880">
    <property type="entry name" value="RIBOSOMAL PROTEIN S19P FAMILY MEMBER"/>
    <property type="match status" value="1"/>
</dbReference>
<dbReference type="PANTHER" id="PTHR11880:SF8">
    <property type="entry name" value="SMALL RIBOSOMAL SUBUNIT PROTEIN US19M"/>
    <property type="match status" value="1"/>
</dbReference>
<dbReference type="Pfam" id="PF00203">
    <property type="entry name" value="Ribosomal_S19"/>
    <property type="match status" value="1"/>
</dbReference>
<dbReference type="PIRSF" id="PIRSF002144">
    <property type="entry name" value="Ribosomal_S19"/>
    <property type="match status" value="1"/>
</dbReference>
<dbReference type="PRINTS" id="PR00975">
    <property type="entry name" value="RIBOSOMALS19"/>
</dbReference>
<dbReference type="SUPFAM" id="SSF54570">
    <property type="entry name" value="Ribosomal protein S19"/>
    <property type="match status" value="1"/>
</dbReference>
<dbReference type="PROSITE" id="PS00323">
    <property type="entry name" value="RIBOSOMAL_S19"/>
    <property type="match status" value="1"/>
</dbReference>
<gene>
    <name evidence="1" type="primary">rpsS</name>
    <name type="ordered locus">PputW619_4745</name>
</gene>
<feature type="chain" id="PRO_1000128022" description="Small ribosomal subunit protein uS19">
    <location>
        <begin position="1"/>
        <end position="91"/>
    </location>
</feature>
<comment type="function">
    <text evidence="1">Protein S19 forms a complex with S13 that binds strongly to the 16S ribosomal RNA.</text>
</comment>
<comment type="similarity">
    <text evidence="1">Belongs to the universal ribosomal protein uS19 family.</text>
</comment>
<name>RS19_PSEPW</name>
<organism>
    <name type="scientific">Pseudomonas putida (strain W619)</name>
    <dbReference type="NCBI Taxonomy" id="390235"/>
    <lineage>
        <taxon>Bacteria</taxon>
        <taxon>Pseudomonadati</taxon>
        <taxon>Pseudomonadota</taxon>
        <taxon>Gammaproteobacteria</taxon>
        <taxon>Pseudomonadales</taxon>
        <taxon>Pseudomonadaceae</taxon>
        <taxon>Pseudomonas</taxon>
    </lineage>
</organism>
<keyword id="KW-0687">Ribonucleoprotein</keyword>
<keyword id="KW-0689">Ribosomal protein</keyword>
<keyword id="KW-0694">RNA-binding</keyword>
<keyword id="KW-0699">rRNA-binding</keyword>
<sequence length="91" mass="10348">MPRSLKKGPFIDLHLLKKVEVAVEKNDRKPVKTWSRRSMILPQMVGLTIAVHNGRQHVPVLVNEDMVGHKLGEFAGTRTYRGHVADKKAKR</sequence>
<evidence type="ECO:0000255" key="1">
    <source>
        <dbReference type="HAMAP-Rule" id="MF_00531"/>
    </source>
</evidence>
<evidence type="ECO:0000305" key="2"/>